<dbReference type="EC" id="2.1.1.228" evidence="1"/>
<dbReference type="EMBL" id="AM910989">
    <property type="protein sequence ID" value="CAQ39186.1"/>
    <property type="molecule type" value="Genomic_DNA"/>
</dbReference>
<dbReference type="RefSeq" id="XP_002258414.1">
    <property type="nucleotide sequence ID" value="XM_002258378.1"/>
</dbReference>
<dbReference type="SMR" id="B3L2G0"/>
<dbReference type="STRING" id="5851.B3L2G0"/>
<dbReference type="EnsemblProtists" id="CAQ39186">
    <property type="protein sequence ID" value="CAQ39186"/>
    <property type="gene ID" value="PKH_071150"/>
</dbReference>
<dbReference type="GeneID" id="7320142"/>
<dbReference type="KEGG" id="pkn:PKNH_0712200"/>
<dbReference type="VEuPathDB" id="PlasmoDB:PKNH_0712200"/>
<dbReference type="HOGENOM" id="CLU_395119_0_0_1"/>
<dbReference type="InParanoid" id="B3L2G0"/>
<dbReference type="OMA" id="GYENMNT"/>
<dbReference type="OrthoDB" id="408788at2759"/>
<dbReference type="PhylomeDB" id="B3L2G0"/>
<dbReference type="Proteomes" id="UP000031513">
    <property type="component" value="Chromosome 7"/>
</dbReference>
<dbReference type="GO" id="GO:0005759">
    <property type="term" value="C:mitochondrial matrix"/>
    <property type="evidence" value="ECO:0007669"/>
    <property type="project" value="UniProtKB-SubCell"/>
</dbReference>
<dbReference type="GO" id="GO:0005634">
    <property type="term" value="C:nucleus"/>
    <property type="evidence" value="ECO:0007669"/>
    <property type="project" value="UniProtKB-SubCell"/>
</dbReference>
<dbReference type="GO" id="GO:0052906">
    <property type="term" value="F:tRNA (guanine(37)-N1)-methyltransferase activity"/>
    <property type="evidence" value="ECO:0007669"/>
    <property type="project" value="UniProtKB-UniRule"/>
</dbReference>
<dbReference type="GO" id="GO:0002939">
    <property type="term" value="P:tRNA N1-guanine methylation"/>
    <property type="evidence" value="ECO:0007669"/>
    <property type="project" value="TreeGrafter"/>
</dbReference>
<dbReference type="FunFam" id="3.30.300.110:FF:000001">
    <property type="entry name" value="tRNA (guanine(37)-N1)-methyltransferase"/>
    <property type="match status" value="1"/>
</dbReference>
<dbReference type="Gene3D" id="3.30.300.110">
    <property type="entry name" value="Met-10+ protein-like domains"/>
    <property type="match status" value="1"/>
</dbReference>
<dbReference type="Gene3D" id="3.40.50.150">
    <property type="entry name" value="Vaccinia Virus protein VP39"/>
    <property type="match status" value="2"/>
</dbReference>
<dbReference type="HAMAP" id="MF_03152">
    <property type="entry name" value="TRM5"/>
    <property type="match status" value="1"/>
</dbReference>
<dbReference type="InterPro" id="IPR030382">
    <property type="entry name" value="MeTrfase_TRM5/TYW2"/>
</dbReference>
<dbReference type="InterPro" id="IPR029063">
    <property type="entry name" value="SAM-dependent_MTases_sf"/>
</dbReference>
<dbReference type="InterPro" id="IPR056743">
    <property type="entry name" value="TRM5-TYW2-like_MTfase"/>
</dbReference>
<dbReference type="InterPro" id="IPR056744">
    <property type="entry name" value="TRM5/TYW2-like_N"/>
</dbReference>
<dbReference type="InterPro" id="IPR025792">
    <property type="entry name" value="tRNA_Gua_MeTrfase_euk"/>
</dbReference>
<dbReference type="PANTHER" id="PTHR23245:SF43">
    <property type="entry name" value="TRNA (GUANINE(37)-N1)-METHYLTRANSFERASE 2"/>
    <property type="match status" value="1"/>
</dbReference>
<dbReference type="PANTHER" id="PTHR23245">
    <property type="entry name" value="TRNA METHYLTRANSFERASE"/>
    <property type="match status" value="1"/>
</dbReference>
<dbReference type="Pfam" id="PF02475">
    <property type="entry name" value="TRM5-TYW2_MTfase"/>
    <property type="match status" value="1"/>
</dbReference>
<dbReference type="Pfam" id="PF25133">
    <property type="entry name" value="TYW2_N_2"/>
    <property type="match status" value="1"/>
</dbReference>
<dbReference type="SUPFAM" id="SSF53335">
    <property type="entry name" value="S-adenosyl-L-methionine-dependent methyltransferases"/>
    <property type="match status" value="1"/>
</dbReference>
<dbReference type="PROSITE" id="PS51684">
    <property type="entry name" value="SAM_MT_TRM5_TYW2"/>
    <property type="match status" value="1"/>
</dbReference>
<gene>
    <name type="ORF">PKH_071150</name>
</gene>
<reference key="1">
    <citation type="journal article" date="2008" name="Nature">
        <title>The genome of the simian and human malaria parasite Plasmodium knowlesi.</title>
        <authorList>
            <person name="Pain A."/>
            <person name="Boehme U."/>
            <person name="Berry A.E."/>
            <person name="Mungall K."/>
            <person name="Finn R.D."/>
            <person name="Jackson A.P."/>
            <person name="Mourier T."/>
            <person name="Mistry J."/>
            <person name="Pasini E.M."/>
            <person name="Aslett M.A."/>
            <person name="Balasubrammaniam S."/>
            <person name="Borgwardt K."/>
            <person name="Brooks K."/>
            <person name="Carret C."/>
            <person name="Carver T.J."/>
            <person name="Cherevach I."/>
            <person name="Chillingworth T."/>
            <person name="Clark T.G."/>
            <person name="Galinski M.R."/>
            <person name="Hall N."/>
            <person name="Harper D."/>
            <person name="Harris D."/>
            <person name="Hauser H."/>
            <person name="Ivens A."/>
            <person name="Janssen C.S."/>
            <person name="Keane T."/>
            <person name="Larke N."/>
            <person name="Lapp S."/>
            <person name="Marti M."/>
            <person name="Moule S."/>
            <person name="Meyer I.M."/>
            <person name="Ormond D."/>
            <person name="Peters N."/>
            <person name="Sanders M."/>
            <person name="Sanders S."/>
            <person name="Sargeant T.J."/>
            <person name="Simmonds M."/>
            <person name="Smith F."/>
            <person name="Squares R."/>
            <person name="Thurston S."/>
            <person name="Tivey A.R."/>
            <person name="Walker D."/>
            <person name="White B."/>
            <person name="Zuiderwijk E."/>
            <person name="Churcher C."/>
            <person name="Quail M.A."/>
            <person name="Cowman A.F."/>
            <person name="Turner C.M.R."/>
            <person name="Rajandream M.A."/>
            <person name="Kocken C.H.M."/>
            <person name="Thomas A.W."/>
            <person name="Newbold C.I."/>
            <person name="Barrell B.G."/>
            <person name="Berriman M."/>
        </authorList>
    </citation>
    <scope>NUCLEOTIDE SEQUENCE [LARGE SCALE GENOMIC DNA]</scope>
    <source>
        <strain>H</strain>
    </source>
</reference>
<name>TRM5_PLAKH</name>
<feature type="chain" id="PRO_0000414144" description="tRNA (guanine(37)-N(1))-methyltransferase">
    <location>
        <begin position="1"/>
        <end position="698"/>
    </location>
</feature>
<feature type="region of interest" description="Disordered" evidence="2">
    <location>
        <begin position="233"/>
        <end position="254"/>
    </location>
</feature>
<feature type="region of interest" description="Disordered" evidence="2">
    <location>
        <begin position="500"/>
        <end position="522"/>
    </location>
</feature>
<feature type="region of interest" description="Disordered" evidence="2">
    <location>
        <begin position="534"/>
        <end position="582"/>
    </location>
</feature>
<feature type="compositionally biased region" description="Basic and acidic residues" evidence="2">
    <location>
        <begin position="234"/>
        <end position="247"/>
    </location>
</feature>
<feature type="compositionally biased region" description="Basic and acidic residues" evidence="2">
    <location>
        <begin position="513"/>
        <end position="522"/>
    </location>
</feature>
<feature type="compositionally biased region" description="Basic and acidic residues" evidence="2">
    <location>
        <begin position="539"/>
        <end position="550"/>
    </location>
</feature>
<feature type="compositionally biased region" description="Basic and acidic residues" evidence="2">
    <location>
        <begin position="569"/>
        <end position="582"/>
    </location>
</feature>
<feature type="binding site" evidence="1">
    <location>
        <position position="394"/>
    </location>
    <ligand>
        <name>S-adenosyl-L-methionine</name>
        <dbReference type="ChEBI" id="CHEBI:59789"/>
    </ligand>
</feature>
<feature type="binding site" evidence="1">
    <location>
        <begin position="432"/>
        <end position="433"/>
    </location>
    <ligand>
        <name>S-adenosyl-L-methionine</name>
        <dbReference type="ChEBI" id="CHEBI:59789"/>
    </ligand>
</feature>
<feature type="binding site" evidence="1">
    <location>
        <begin position="459"/>
        <end position="460"/>
    </location>
    <ligand>
        <name>S-adenosyl-L-methionine</name>
        <dbReference type="ChEBI" id="CHEBI:59789"/>
    </ligand>
</feature>
<feature type="binding site" evidence="1">
    <location>
        <position position="603"/>
    </location>
    <ligand>
        <name>S-adenosyl-L-methionine</name>
        <dbReference type="ChEBI" id="CHEBI:59789"/>
    </ligand>
</feature>
<keyword id="KW-0963">Cytoplasm</keyword>
<keyword id="KW-0489">Methyltransferase</keyword>
<keyword id="KW-0496">Mitochondrion</keyword>
<keyword id="KW-0539">Nucleus</keyword>
<keyword id="KW-1185">Reference proteome</keyword>
<keyword id="KW-0949">S-adenosyl-L-methionine</keyword>
<keyword id="KW-0808">Transferase</keyword>
<keyword id="KW-0819">tRNA processing</keyword>
<sequence length="698" mass="80681">MFYGFLLLYPLLSLCLEHVISLSKKGKPTLGFVIMRNAVDIKTLSDVKDRVKNEKRTHCLVVNKYKVNDVLKNKEAKFYFLNVFRFPSVLKLREYEGNLMETGQYNGEVLRFIHSYVERLGGGGTHVGGKADSKADGKVNHDVSDQVVAQQTDQQMDQQMDQQTDQQMDQQMDQKRDAALEDCRLIPLNARFNKALQELMQREGKEIMEGLDMHLEEGDAGNVTVEGVAMEDDSTAHDSVQRNEGKTPKGPLDGQWPPLEELFRIIKKEGIQISIIQLQFGYDNMNTSEILRKIFPTESEVIHKYEMIGHIAHLNFCERFENYKKVIAEIILDKNKSIKTVINKMDTLKNLHRTFNIELLAGEKNYLTTLKENDIKVKLNYELIYWNSKLKKERDRIYDLVENNSIIVDLFAGVGIFSLHLSKKKCLCFSNDINSHAYNFMNVNIKLNKRKSILTYNLDARAFVQMLLGLDIFSSDKTTLSMQLSEQNWKNISLDFINSPDQNNVDTGKRKKRESDRVGHVDDDITANATIDKKKKLRHADTNDPLEERPLGLAATHHGEENIQSVERTNNDSEKTKEDAPRDVTHQVDINLGIYGDIHVLMNLPQTAFEFLDIFRELLDTYSTDQKDFQGKCRRDQMRNVFIHCYFFSKPELFYEDAERNIRMQLGGLPREMKITEIRKVSPSKLMYVAEFNLKDVF</sequence>
<proteinExistence type="inferred from homology"/>
<protein>
    <recommendedName>
        <fullName evidence="1">tRNA (guanine(37)-N(1))-methyltransferase</fullName>
        <ecNumber evidence="1">2.1.1.228</ecNumber>
    </recommendedName>
    <alternativeName>
        <fullName evidence="1">M1G-methyltransferase</fullName>
    </alternativeName>
    <alternativeName>
        <fullName evidence="1">tRNA [GM37] methyltransferase</fullName>
    </alternativeName>
    <alternativeName>
        <fullName evidence="1">tRNA methyltransferase 5 homolog</fullName>
    </alternativeName>
</protein>
<evidence type="ECO:0000255" key="1">
    <source>
        <dbReference type="HAMAP-Rule" id="MF_03152"/>
    </source>
</evidence>
<evidence type="ECO:0000256" key="2">
    <source>
        <dbReference type="SAM" id="MobiDB-lite"/>
    </source>
</evidence>
<evidence type="ECO:0000305" key="3"/>
<comment type="function">
    <text evidence="1">Specifically methylates the N1 position of guanosine-37 in various cytoplasmic and mitochondrial tRNAs. Methylation is not dependent on the nature of the nucleoside 5' of the target nucleoside. This is the first step in the biosynthesis of wybutosine (yW), a modified base adjacent to the anticodon of tRNAs and required for accurate decoding.</text>
</comment>
<comment type="catalytic activity">
    <reaction evidence="1">
        <text>guanosine(37) in tRNA + S-adenosyl-L-methionine = N(1)-methylguanosine(37) in tRNA + S-adenosyl-L-homocysteine + H(+)</text>
        <dbReference type="Rhea" id="RHEA:36899"/>
        <dbReference type="Rhea" id="RHEA-COMP:10145"/>
        <dbReference type="Rhea" id="RHEA-COMP:10147"/>
        <dbReference type="ChEBI" id="CHEBI:15378"/>
        <dbReference type="ChEBI" id="CHEBI:57856"/>
        <dbReference type="ChEBI" id="CHEBI:59789"/>
        <dbReference type="ChEBI" id="CHEBI:73542"/>
        <dbReference type="ChEBI" id="CHEBI:74269"/>
        <dbReference type="EC" id="2.1.1.228"/>
    </reaction>
</comment>
<comment type="subunit">
    <text evidence="1">Monomer.</text>
</comment>
<comment type="subcellular location">
    <subcellularLocation>
        <location evidence="1">Mitochondrion matrix</location>
    </subcellularLocation>
    <subcellularLocation>
        <location evidence="1">Nucleus</location>
    </subcellularLocation>
    <subcellularLocation>
        <location evidence="1">Cytoplasm</location>
    </subcellularLocation>
    <text evidence="1">Predominantly in the mitochondria and in the nucleus.</text>
</comment>
<comment type="similarity">
    <text evidence="3">Belongs to the class I-like SAM-binding methyltransferase superfamily. TRM5/TYW2 family.</text>
</comment>
<accession>B3L2G0</accession>
<organism>
    <name type="scientific">Plasmodium knowlesi (strain H)</name>
    <dbReference type="NCBI Taxonomy" id="5851"/>
    <lineage>
        <taxon>Eukaryota</taxon>
        <taxon>Sar</taxon>
        <taxon>Alveolata</taxon>
        <taxon>Apicomplexa</taxon>
        <taxon>Aconoidasida</taxon>
        <taxon>Haemosporida</taxon>
        <taxon>Plasmodiidae</taxon>
        <taxon>Plasmodium</taxon>
        <taxon>Plasmodium (Plasmodium)</taxon>
    </lineage>
</organism>